<organism>
    <name type="scientific">Staphylococcus aureus (strain Mu50 / ATCC 700699)</name>
    <dbReference type="NCBI Taxonomy" id="158878"/>
    <lineage>
        <taxon>Bacteria</taxon>
        <taxon>Bacillati</taxon>
        <taxon>Bacillota</taxon>
        <taxon>Bacilli</taxon>
        <taxon>Bacillales</taxon>
        <taxon>Staphylococcaceae</taxon>
        <taxon>Staphylococcus</taxon>
    </lineage>
</organism>
<gene>
    <name type="primary">spsB</name>
    <name type="ordered locus">SAV0965</name>
</gene>
<reference key="1">
    <citation type="journal article" date="2001" name="Lancet">
        <title>Whole genome sequencing of meticillin-resistant Staphylococcus aureus.</title>
        <authorList>
            <person name="Kuroda M."/>
            <person name="Ohta T."/>
            <person name="Uchiyama I."/>
            <person name="Baba T."/>
            <person name="Yuzawa H."/>
            <person name="Kobayashi I."/>
            <person name="Cui L."/>
            <person name="Oguchi A."/>
            <person name="Aoki K."/>
            <person name="Nagai Y."/>
            <person name="Lian J.-Q."/>
            <person name="Ito T."/>
            <person name="Kanamori M."/>
            <person name="Matsumaru H."/>
            <person name="Maruyama A."/>
            <person name="Murakami H."/>
            <person name="Hosoyama A."/>
            <person name="Mizutani-Ui Y."/>
            <person name="Takahashi N.K."/>
            <person name="Sawano T."/>
            <person name="Inoue R."/>
            <person name="Kaito C."/>
            <person name="Sekimizu K."/>
            <person name="Hirakawa H."/>
            <person name="Kuhara S."/>
            <person name="Goto S."/>
            <person name="Yabuzaki J."/>
            <person name="Kanehisa M."/>
            <person name="Yamashita A."/>
            <person name="Oshima K."/>
            <person name="Furuya K."/>
            <person name="Yoshino C."/>
            <person name="Shiba T."/>
            <person name="Hattori M."/>
            <person name="Ogasawara N."/>
            <person name="Hayashi H."/>
            <person name="Hiramatsu K."/>
        </authorList>
    </citation>
    <scope>NUCLEOTIDE SEQUENCE [LARGE SCALE GENOMIC DNA]</scope>
    <source>
        <strain>Mu50 / ATCC 700699</strain>
    </source>
</reference>
<sequence>MKKELLEWIISIAVAFVILFIVGKFIVTPYTIKGESMDPTLKDGERVAVNIIGYKTGGLEKGNVVVFHANKNDDYVKRVIGVPGDKVEYKNDTLYVNGKKQDEPYLNYNLKHKQGDYITGTFQVKDLPNANPKSNVIPKGKYLVLGDNREVSKDSRAFGLIDEDQIVGKVSFRFWPFSEFKHNFNPENTKN</sequence>
<keyword id="KW-1003">Cell membrane</keyword>
<keyword id="KW-0378">Hydrolase</keyword>
<keyword id="KW-0472">Membrane</keyword>
<keyword id="KW-0645">Protease</keyword>
<keyword id="KW-0812">Transmembrane</keyword>
<keyword id="KW-1133">Transmembrane helix</keyword>
<evidence type="ECO:0000250" key="1"/>
<evidence type="ECO:0000255" key="2"/>
<evidence type="ECO:0000305" key="3"/>
<proteinExistence type="inferred from homology"/>
<name>LEP_STAAM</name>
<comment type="function">
    <text evidence="1">Essential for cell viability.</text>
</comment>
<comment type="catalytic activity">
    <reaction>
        <text>Cleavage of hydrophobic, N-terminal signal or leader sequences from secreted and periplasmic proteins.</text>
        <dbReference type="EC" id="3.4.21.89"/>
    </reaction>
</comment>
<comment type="subcellular location">
    <subcellularLocation>
        <location evidence="3">Cell membrane</location>
        <topology evidence="3">Single-pass type II membrane protein</topology>
    </subcellularLocation>
</comment>
<comment type="similarity">
    <text evidence="3">Belongs to the peptidase S26 family.</text>
</comment>
<feature type="chain" id="PRO_0000109527" description="Signal peptidase IB">
    <location>
        <begin position="1"/>
        <end position="191"/>
    </location>
</feature>
<feature type="topological domain" description="Cytoplasmic" evidence="2">
    <location>
        <begin position="1"/>
        <end position="7"/>
    </location>
</feature>
<feature type="transmembrane region" description="Helical" evidence="2">
    <location>
        <begin position="8"/>
        <end position="28"/>
    </location>
</feature>
<feature type="topological domain" description="Extracellular" evidence="2">
    <location>
        <begin position="29"/>
        <end position="191"/>
    </location>
</feature>
<feature type="active site" evidence="1">
    <location>
        <position position="36"/>
    </location>
</feature>
<feature type="active site" evidence="1">
    <location>
        <position position="77"/>
    </location>
</feature>
<accession>P0A067</accession>
<accession>P72365</accession>
<protein>
    <recommendedName>
        <fullName>Signal peptidase IB</fullName>
        <shortName>SPase IB</shortName>
        <ecNumber>3.4.21.89</ecNumber>
    </recommendedName>
    <alternativeName>
        <fullName>Leader peptidase IB</fullName>
    </alternativeName>
</protein>
<dbReference type="EC" id="3.4.21.89"/>
<dbReference type="EMBL" id="BA000017">
    <property type="protein sequence ID" value="BAB57127.1"/>
    <property type="molecule type" value="Genomic_DNA"/>
</dbReference>
<dbReference type="SMR" id="P0A067"/>
<dbReference type="MEROPS" id="S26.016"/>
<dbReference type="DNASU" id="1120940"/>
<dbReference type="KEGG" id="sav:SAV0965"/>
<dbReference type="HOGENOM" id="CLU_028723_5_0_9"/>
<dbReference type="PhylomeDB" id="P0A067"/>
<dbReference type="Proteomes" id="UP000002481">
    <property type="component" value="Chromosome"/>
</dbReference>
<dbReference type="GO" id="GO:0005886">
    <property type="term" value="C:plasma membrane"/>
    <property type="evidence" value="ECO:0007669"/>
    <property type="project" value="UniProtKB-SubCell"/>
</dbReference>
<dbReference type="GO" id="GO:0004252">
    <property type="term" value="F:serine-type endopeptidase activity"/>
    <property type="evidence" value="ECO:0007669"/>
    <property type="project" value="UniProtKB-EC"/>
</dbReference>
<dbReference type="GO" id="GO:0006465">
    <property type="term" value="P:signal peptide processing"/>
    <property type="evidence" value="ECO:0007669"/>
    <property type="project" value="InterPro"/>
</dbReference>
<dbReference type="CDD" id="cd06530">
    <property type="entry name" value="S26_SPase_I"/>
    <property type="match status" value="1"/>
</dbReference>
<dbReference type="FunFam" id="2.10.109.10:FF:000008">
    <property type="entry name" value="Signal peptidase I"/>
    <property type="match status" value="1"/>
</dbReference>
<dbReference type="Gene3D" id="2.10.109.10">
    <property type="entry name" value="Umud Fragment, subunit A"/>
    <property type="match status" value="1"/>
</dbReference>
<dbReference type="InterPro" id="IPR036286">
    <property type="entry name" value="LexA/Signal_pep-like_sf"/>
</dbReference>
<dbReference type="InterPro" id="IPR000223">
    <property type="entry name" value="Pept_S26A_signal_pept_1"/>
</dbReference>
<dbReference type="InterPro" id="IPR019758">
    <property type="entry name" value="Pept_S26A_signal_pept_1_CS"/>
</dbReference>
<dbReference type="InterPro" id="IPR019757">
    <property type="entry name" value="Pept_S26A_signal_pept_1_Lys-AS"/>
</dbReference>
<dbReference type="InterPro" id="IPR019756">
    <property type="entry name" value="Pept_S26A_signal_pept_1_Ser-AS"/>
</dbReference>
<dbReference type="InterPro" id="IPR019533">
    <property type="entry name" value="Peptidase_S26"/>
</dbReference>
<dbReference type="NCBIfam" id="TIGR02227">
    <property type="entry name" value="sigpep_I_bact"/>
    <property type="match status" value="1"/>
</dbReference>
<dbReference type="PANTHER" id="PTHR43390:SF1">
    <property type="entry name" value="CHLOROPLAST PROCESSING PEPTIDASE"/>
    <property type="match status" value="1"/>
</dbReference>
<dbReference type="PANTHER" id="PTHR43390">
    <property type="entry name" value="SIGNAL PEPTIDASE I"/>
    <property type="match status" value="1"/>
</dbReference>
<dbReference type="Pfam" id="PF10502">
    <property type="entry name" value="Peptidase_S26"/>
    <property type="match status" value="1"/>
</dbReference>
<dbReference type="PRINTS" id="PR00727">
    <property type="entry name" value="LEADERPTASE"/>
</dbReference>
<dbReference type="SUPFAM" id="SSF51306">
    <property type="entry name" value="LexA/Signal peptidase"/>
    <property type="match status" value="1"/>
</dbReference>
<dbReference type="PROSITE" id="PS00501">
    <property type="entry name" value="SPASE_I_1"/>
    <property type="match status" value="1"/>
</dbReference>
<dbReference type="PROSITE" id="PS00760">
    <property type="entry name" value="SPASE_I_2"/>
    <property type="match status" value="1"/>
</dbReference>
<dbReference type="PROSITE" id="PS00761">
    <property type="entry name" value="SPASE_I_3"/>
    <property type="match status" value="1"/>
</dbReference>